<keyword id="KW-0025">Alternative splicing</keyword>
<keyword id="KW-0156">Chromatin regulator</keyword>
<keyword id="KW-0479">Metal-binding</keyword>
<keyword id="KW-0539">Nucleus</keyword>
<keyword id="KW-1185">Reference proteome</keyword>
<keyword id="KW-0677">Repeat</keyword>
<keyword id="KW-0804">Transcription</keyword>
<keyword id="KW-0805">Transcription regulation</keyword>
<keyword id="KW-0862">Zinc</keyword>
<keyword id="KW-0863">Zinc-finger</keyword>
<feature type="chain" id="PRO_0000337078" description="Lethal(3)malignant brain tumor-like protein 4">
    <location>
        <begin position="1"/>
        <end position="621"/>
    </location>
</feature>
<feature type="repeat" description="MBT 1">
    <location>
        <begin position="52"/>
        <end position="152"/>
    </location>
</feature>
<feature type="repeat" description="MBT 2">
    <location>
        <begin position="160"/>
        <end position="260"/>
    </location>
</feature>
<feature type="repeat" description="MBT 3">
    <location>
        <begin position="269"/>
        <end position="364"/>
    </location>
</feature>
<feature type="domain" description="SAM" evidence="2">
    <location>
        <begin position="543"/>
        <end position="607"/>
    </location>
</feature>
<feature type="zinc finger region" description="CCHHC-type" evidence="3">
    <location>
        <begin position="370"/>
        <end position="414"/>
    </location>
</feature>
<feature type="region of interest" description="Disordered" evidence="4">
    <location>
        <begin position="1"/>
        <end position="48"/>
    </location>
</feature>
<feature type="compositionally biased region" description="Basic and acidic residues" evidence="4">
    <location>
        <begin position="10"/>
        <end position="20"/>
    </location>
</feature>
<feature type="compositionally biased region" description="Basic and acidic residues" evidence="4">
    <location>
        <begin position="28"/>
        <end position="44"/>
    </location>
</feature>
<feature type="binding site" evidence="3">
    <location>
        <position position="379"/>
    </location>
    <ligand>
        <name>Zn(2+)</name>
        <dbReference type="ChEBI" id="CHEBI:29105"/>
    </ligand>
</feature>
<feature type="binding site" evidence="3">
    <location>
        <position position="384"/>
    </location>
    <ligand>
        <name>Zn(2+)</name>
        <dbReference type="ChEBI" id="CHEBI:29105"/>
    </ligand>
</feature>
<feature type="binding site" evidence="3">
    <location>
        <position position="398"/>
    </location>
    <ligand>
        <name>Zn(2+)</name>
        <dbReference type="ChEBI" id="CHEBI:29105"/>
    </ligand>
</feature>
<feature type="binding site" evidence="3">
    <location>
        <position position="404"/>
    </location>
    <ligand>
        <name>Zn(2+)</name>
        <dbReference type="ChEBI" id="CHEBI:29105"/>
    </ligand>
</feature>
<feature type="splice variant" id="VSP_033865" description="In isoform 2." evidence="5 6">
    <original>DYRKDKFVWMDYLKACRLQN</original>
    <variation>GKPGHIYHLQGGVLVIPALF</variation>
    <location>
        <begin position="154"/>
        <end position="173"/>
    </location>
</feature>
<feature type="splice variant" id="VSP_033866" description="In isoform 2." evidence="5 6">
    <location>
        <begin position="174"/>
        <end position="621"/>
    </location>
</feature>
<comment type="function">
    <text evidence="1">Putative Polycomb group (PcG) protein. PcG proteins maintain the transcriptionally repressive state of genes, probably via a modification of chromatin, rendering it heritably changed in its expressibility (By similarity).</text>
</comment>
<comment type="subcellular location">
    <subcellularLocation>
        <location evidence="7">Nucleus</location>
    </subcellularLocation>
</comment>
<comment type="alternative products">
    <event type="alternative splicing"/>
    <isoform>
        <id>B1B1A0-1</id>
        <name>1</name>
        <sequence type="displayed"/>
    </isoform>
    <isoform>
        <id>B1B1A0-2</id>
        <name>2</name>
        <sequence type="described" ref="VSP_033865 VSP_033866"/>
    </isoform>
</comment>
<gene>
    <name type="primary">L3mbtl4</name>
</gene>
<sequence length="621" mass="70898">MRQPNRKRKLSLESTERMNQDRCTGQTEEEKKPGEVTTPSKRESSVTTAETWSWEQYLREGNAVAAPVELFSKDQSFPEHENGFQVGMRLEGIDARRPSVFCVLSVAEVCGYRLRLHFDGYLSCYDFWTNAGSPDIHPVGWCQKTKHELHIPRDYRKDKFVWMDYLKACRLQNAPKKLFRNRSSNGPVPREFQVGMKLEAVDRRNPCLMCVATIADIVEDRVRVHFDSLDDSFDYWCDVNSPYIQPVGWCQENGRTLVAPQGYPHPDKFSWTDYLRASQSKAVPAKAFGMRTPHGFLPNMKLEAVDKRNPQLIRVATIADVDDYRVKIHFDGWDHKYDYWVDADSQDIHPIGWCDVTGHPLEVPYGSKHVKILPGQPACPTPGCRGIGHIRGPRYAGHHSAFGCPYSDVNLKREAALQDRLREQTQANLELDPSHSKSENPCNLNVNGKCENANSQCRLVQQAKCLKIKGKEDIDLDNLFRVLVFHPRRLEYSAAQVQQMLHQPLSMTSTSAHPFRDIPLSREQHCKLLPGVADIQASQVARWTVDEVAEFVQSLLGCEEHAKCFKKEQIDGKAFLLLTQADIVKVMRIKLGPALKIYNSILMFRNSQDVTEDASSQEDKR</sequence>
<evidence type="ECO:0000250" key="1"/>
<evidence type="ECO:0000255" key="2">
    <source>
        <dbReference type="PROSITE-ProRule" id="PRU00184"/>
    </source>
</evidence>
<evidence type="ECO:0000255" key="3">
    <source>
        <dbReference type="PROSITE-ProRule" id="PRU01143"/>
    </source>
</evidence>
<evidence type="ECO:0000256" key="4">
    <source>
        <dbReference type="SAM" id="MobiDB-lite"/>
    </source>
</evidence>
<evidence type="ECO:0000303" key="5">
    <source>
    </source>
</evidence>
<evidence type="ECO:0000303" key="6">
    <source>
    </source>
</evidence>
<evidence type="ECO:0000305" key="7"/>
<proteinExistence type="evidence at transcript level"/>
<reference key="1">
    <citation type="journal article" date="2005" name="Science">
        <title>The transcriptional landscape of the mammalian genome.</title>
        <authorList>
            <person name="Carninci P."/>
            <person name="Kasukawa T."/>
            <person name="Katayama S."/>
            <person name="Gough J."/>
            <person name="Frith M.C."/>
            <person name="Maeda N."/>
            <person name="Oyama R."/>
            <person name="Ravasi T."/>
            <person name="Lenhard B."/>
            <person name="Wells C."/>
            <person name="Kodzius R."/>
            <person name="Shimokawa K."/>
            <person name="Bajic V.B."/>
            <person name="Brenner S.E."/>
            <person name="Batalov S."/>
            <person name="Forrest A.R."/>
            <person name="Zavolan M."/>
            <person name="Davis M.J."/>
            <person name="Wilming L.G."/>
            <person name="Aidinis V."/>
            <person name="Allen J.E."/>
            <person name="Ambesi-Impiombato A."/>
            <person name="Apweiler R."/>
            <person name="Aturaliya R.N."/>
            <person name="Bailey T.L."/>
            <person name="Bansal M."/>
            <person name="Baxter L."/>
            <person name="Beisel K.W."/>
            <person name="Bersano T."/>
            <person name="Bono H."/>
            <person name="Chalk A.M."/>
            <person name="Chiu K.P."/>
            <person name="Choudhary V."/>
            <person name="Christoffels A."/>
            <person name="Clutterbuck D.R."/>
            <person name="Crowe M.L."/>
            <person name="Dalla E."/>
            <person name="Dalrymple B.P."/>
            <person name="de Bono B."/>
            <person name="Della Gatta G."/>
            <person name="di Bernardo D."/>
            <person name="Down T."/>
            <person name="Engstrom P."/>
            <person name="Fagiolini M."/>
            <person name="Faulkner G."/>
            <person name="Fletcher C.F."/>
            <person name="Fukushima T."/>
            <person name="Furuno M."/>
            <person name="Futaki S."/>
            <person name="Gariboldi M."/>
            <person name="Georgii-Hemming P."/>
            <person name="Gingeras T.R."/>
            <person name="Gojobori T."/>
            <person name="Green R.E."/>
            <person name="Gustincich S."/>
            <person name="Harbers M."/>
            <person name="Hayashi Y."/>
            <person name="Hensch T.K."/>
            <person name="Hirokawa N."/>
            <person name="Hill D."/>
            <person name="Huminiecki L."/>
            <person name="Iacono M."/>
            <person name="Ikeo K."/>
            <person name="Iwama A."/>
            <person name="Ishikawa T."/>
            <person name="Jakt M."/>
            <person name="Kanapin A."/>
            <person name="Katoh M."/>
            <person name="Kawasawa Y."/>
            <person name="Kelso J."/>
            <person name="Kitamura H."/>
            <person name="Kitano H."/>
            <person name="Kollias G."/>
            <person name="Krishnan S.P."/>
            <person name="Kruger A."/>
            <person name="Kummerfeld S.K."/>
            <person name="Kurochkin I.V."/>
            <person name="Lareau L.F."/>
            <person name="Lazarevic D."/>
            <person name="Lipovich L."/>
            <person name="Liu J."/>
            <person name="Liuni S."/>
            <person name="McWilliam S."/>
            <person name="Madan Babu M."/>
            <person name="Madera M."/>
            <person name="Marchionni L."/>
            <person name="Matsuda H."/>
            <person name="Matsuzawa S."/>
            <person name="Miki H."/>
            <person name="Mignone F."/>
            <person name="Miyake S."/>
            <person name="Morris K."/>
            <person name="Mottagui-Tabar S."/>
            <person name="Mulder N."/>
            <person name="Nakano N."/>
            <person name="Nakauchi H."/>
            <person name="Ng P."/>
            <person name="Nilsson R."/>
            <person name="Nishiguchi S."/>
            <person name="Nishikawa S."/>
            <person name="Nori F."/>
            <person name="Ohara O."/>
            <person name="Okazaki Y."/>
            <person name="Orlando V."/>
            <person name="Pang K.C."/>
            <person name="Pavan W.J."/>
            <person name="Pavesi G."/>
            <person name="Pesole G."/>
            <person name="Petrovsky N."/>
            <person name="Piazza S."/>
            <person name="Reed J."/>
            <person name="Reid J.F."/>
            <person name="Ring B.Z."/>
            <person name="Ringwald M."/>
            <person name="Rost B."/>
            <person name="Ruan Y."/>
            <person name="Salzberg S.L."/>
            <person name="Sandelin A."/>
            <person name="Schneider C."/>
            <person name="Schoenbach C."/>
            <person name="Sekiguchi K."/>
            <person name="Semple C.A."/>
            <person name="Seno S."/>
            <person name="Sessa L."/>
            <person name="Sheng Y."/>
            <person name="Shibata Y."/>
            <person name="Shimada H."/>
            <person name="Shimada K."/>
            <person name="Silva D."/>
            <person name="Sinclair B."/>
            <person name="Sperling S."/>
            <person name="Stupka E."/>
            <person name="Sugiura K."/>
            <person name="Sultana R."/>
            <person name="Takenaka Y."/>
            <person name="Taki K."/>
            <person name="Tammoja K."/>
            <person name="Tan S.L."/>
            <person name="Tang S."/>
            <person name="Taylor M.S."/>
            <person name="Tegner J."/>
            <person name="Teichmann S.A."/>
            <person name="Ueda H.R."/>
            <person name="van Nimwegen E."/>
            <person name="Verardo R."/>
            <person name="Wei C.L."/>
            <person name="Yagi K."/>
            <person name="Yamanishi H."/>
            <person name="Zabarovsky E."/>
            <person name="Zhu S."/>
            <person name="Zimmer A."/>
            <person name="Hide W."/>
            <person name="Bult C."/>
            <person name="Grimmond S.M."/>
            <person name="Teasdale R.D."/>
            <person name="Liu E.T."/>
            <person name="Brusic V."/>
            <person name="Quackenbush J."/>
            <person name="Wahlestedt C."/>
            <person name="Mattick J.S."/>
            <person name="Hume D.A."/>
            <person name="Kai C."/>
            <person name="Sasaki D."/>
            <person name="Tomaru Y."/>
            <person name="Fukuda S."/>
            <person name="Kanamori-Katayama M."/>
            <person name="Suzuki M."/>
            <person name="Aoki J."/>
            <person name="Arakawa T."/>
            <person name="Iida J."/>
            <person name="Imamura K."/>
            <person name="Itoh M."/>
            <person name="Kato T."/>
            <person name="Kawaji H."/>
            <person name="Kawagashira N."/>
            <person name="Kawashima T."/>
            <person name="Kojima M."/>
            <person name="Kondo S."/>
            <person name="Konno H."/>
            <person name="Nakano K."/>
            <person name="Ninomiya N."/>
            <person name="Nishio T."/>
            <person name="Okada M."/>
            <person name="Plessy C."/>
            <person name="Shibata K."/>
            <person name="Shiraki T."/>
            <person name="Suzuki S."/>
            <person name="Tagami M."/>
            <person name="Waki K."/>
            <person name="Watahiki A."/>
            <person name="Okamura-Oho Y."/>
            <person name="Suzuki H."/>
            <person name="Kawai J."/>
            <person name="Hayashizaki Y."/>
        </authorList>
    </citation>
    <scope>NUCLEOTIDE SEQUENCE [LARGE SCALE MRNA] (ISOFORM 2)</scope>
    <source>
        <strain>C57BL/6J</strain>
        <tissue>Spinal cord</tissue>
    </source>
</reference>
<reference key="2">
    <citation type="journal article" date="2009" name="PLoS Biol.">
        <title>Lineage-specific biology revealed by a finished genome assembly of the mouse.</title>
        <authorList>
            <person name="Church D.M."/>
            <person name="Goodstadt L."/>
            <person name="Hillier L.W."/>
            <person name="Zody M.C."/>
            <person name="Goldstein S."/>
            <person name="She X."/>
            <person name="Bult C.J."/>
            <person name="Agarwala R."/>
            <person name="Cherry J.L."/>
            <person name="DiCuccio M."/>
            <person name="Hlavina W."/>
            <person name="Kapustin Y."/>
            <person name="Meric P."/>
            <person name="Maglott D."/>
            <person name="Birtle Z."/>
            <person name="Marques A.C."/>
            <person name="Graves T."/>
            <person name="Zhou S."/>
            <person name="Teague B."/>
            <person name="Potamousis K."/>
            <person name="Churas C."/>
            <person name="Place M."/>
            <person name="Herschleb J."/>
            <person name="Runnheim R."/>
            <person name="Forrest D."/>
            <person name="Amos-Landgraf J."/>
            <person name="Schwartz D.C."/>
            <person name="Cheng Z."/>
            <person name="Lindblad-Toh K."/>
            <person name="Eichler E.E."/>
            <person name="Ponting C.P."/>
        </authorList>
    </citation>
    <scope>NUCLEOTIDE SEQUENCE [LARGE SCALE GENOMIC DNA]</scope>
    <source>
        <strain>C57BL/6J</strain>
    </source>
</reference>
<reference key="3">
    <citation type="journal article" date="2004" name="Genome Res.">
        <title>The status, quality, and expansion of the NIH full-length cDNA project: the Mammalian Gene Collection (MGC).</title>
        <authorList>
            <consortium name="The MGC Project Team"/>
        </authorList>
    </citation>
    <scope>NUCLEOTIDE SEQUENCE [LARGE SCALE MRNA] (ISOFORM 2)</scope>
    <source>
        <tissue>Brain</tissue>
    </source>
</reference>
<name>LMBL4_MOUSE</name>
<protein>
    <recommendedName>
        <fullName>Lethal(3)malignant brain tumor-like protein 4</fullName>
        <shortName>L(3)mbt-like protein 4</shortName>
    </recommendedName>
</protein>
<organism>
    <name type="scientific">Mus musculus</name>
    <name type="common">Mouse</name>
    <dbReference type="NCBI Taxonomy" id="10090"/>
    <lineage>
        <taxon>Eukaryota</taxon>
        <taxon>Metazoa</taxon>
        <taxon>Chordata</taxon>
        <taxon>Craniata</taxon>
        <taxon>Vertebrata</taxon>
        <taxon>Euteleostomi</taxon>
        <taxon>Mammalia</taxon>
        <taxon>Eutheria</taxon>
        <taxon>Euarchontoglires</taxon>
        <taxon>Glires</taxon>
        <taxon>Rodentia</taxon>
        <taxon>Myomorpha</taxon>
        <taxon>Muroidea</taxon>
        <taxon>Muridae</taxon>
        <taxon>Murinae</taxon>
        <taxon>Mus</taxon>
        <taxon>Mus</taxon>
    </lineage>
</organism>
<accession>B1B1A0</accession>
<accession>B2RVB2</accession>
<accession>Q8BHZ8</accession>
<dbReference type="EMBL" id="AK039470">
    <property type="protein sequence ID" value="BAC30360.1"/>
    <property type="molecule type" value="mRNA"/>
</dbReference>
<dbReference type="EMBL" id="AC154493">
    <property type="status" value="NOT_ANNOTATED_CDS"/>
    <property type="molecule type" value="Genomic_DNA"/>
</dbReference>
<dbReference type="EMBL" id="AC191933">
    <property type="status" value="NOT_ANNOTATED_CDS"/>
    <property type="molecule type" value="Genomic_DNA"/>
</dbReference>
<dbReference type="EMBL" id="AC117803">
    <property type="status" value="NOT_ANNOTATED_CDS"/>
    <property type="molecule type" value="Genomic_DNA"/>
</dbReference>
<dbReference type="EMBL" id="AC154758">
    <property type="status" value="NOT_ANNOTATED_CDS"/>
    <property type="molecule type" value="Genomic_DNA"/>
</dbReference>
<dbReference type="EMBL" id="CT010483">
    <property type="status" value="NOT_ANNOTATED_CDS"/>
    <property type="molecule type" value="Genomic_DNA"/>
</dbReference>
<dbReference type="EMBL" id="BC147118">
    <property type="protein sequence ID" value="AAI47119.1"/>
    <property type="molecule type" value="mRNA"/>
</dbReference>
<dbReference type="EMBL" id="BC147119">
    <property type="protein sequence ID" value="AAI47120.1"/>
    <property type="molecule type" value="mRNA"/>
</dbReference>
<dbReference type="RefSeq" id="NP_796252.2">
    <molecule id="B1B1A0-1"/>
    <property type="nucleotide sequence ID" value="NM_177278.6"/>
</dbReference>
<dbReference type="SMR" id="B1B1A0"/>
<dbReference type="FunCoup" id="B1B1A0">
    <property type="interactions" value="9"/>
</dbReference>
<dbReference type="STRING" id="10090.ENSMUSP00000094892"/>
<dbReference type="GlyGen" id="B1B1A0">
    <property type="glycosylation" value="1 site"/>
</dbReference>
<dbReference type="iPTMnet" id="B1B1A0"/>
<dbReference type="PhosphoSitePlus" id="B1B1A0"/>
<dbReference type="SwissPalm" id="B1B1A0"/>
<dbReference type="PaxDb" id="10090-ENSMUSP00000094892"/>
<dbReference type="ProteomicsDB" id="290042">
    <molecule id="B1B1A0-1"/>
</dbReference>
<dbReference type="ProteomicsDB" id="290043">
    <molecule id="B1B1A0-2"/>
</dbReference>
<dbReference type="DNASU" id="320858"/>
<dbReference type="GeneID" id="320858"/>
<dbReference type="KEGG" id="mmu:320858"/>
<dbReference type="UCSC" id="uc008dkk.2">
    <molecule id="B1B1A0-2"/>
    <property type="organism name" value="mouse"/>
</dbReference>
<dbReference type="UCSC" id="uc008dkm.2">
    <molecule id="B1B1A0-1"/>
    <property type="organism name" value="mouse"/>
</dbReference>
<dbReference type="AGR" id="MGI:2444889"/>
<dbReference type="CTD" id="91133"/>
<dbReference type="MGI" id="MGI:2444889">
    <property type="gene designation" value="L3mbtl4"/>
</dbReference>
<dbReference type="eggNOG" id="KOG3766">
    <property type="taxonomic scope" value="Eukaryota"/>
</dbReference>
<dbReference type="InParanoid" id="B1B1A0"/>
<dbReference type="OrthoDB" id="8188861at2759"/>
<dbReference type="BioGRID-ORCS" id="320858">
    <property type="hits" value="3 hits in 75 CRISPR screens"/>
</dbReference>
<dbReference type="ChiTaRS" id="L3mbtl4">
    <property type="organism name" value="mouse"/>
</dbReference>
<dbReference type="PRO" id="PR:B1B1A0"/>
<dbReference type="Proteomes" id="UP000000589">
    <property type="component" value="Unplaced"/>
</dbReference>
<dbReference type="RNAct" id="B1B1A0">
    <property type="molecule type" value="protein"/>
</dbReference>
<dbReference type="GO" id="GO:0005634">
    <property type="term" value="C:nucleus"/>
    <property type="evidence" value="ECO:0007669"/>
    <property type="project" value="UniProtKB-SubCell"/>
</dbReference>
<dbReference type="GO" id="GO:0008270">
    <property type="term" value="F:zinc ion binding"/>
    <property type="evidence" value="ECO:0007669"/>
    <property type="project" value="UniProtKB-KW"/>
</dbReference>
<dbReference type="GO" id="GO:0006325">
    <property type="term" value="P:chromatin organization"/>
    <property type="evidence" value="ECO:0007669"/>
    <property type="project" value="UniProtKB-KW"/>
</dbReference>
<dbReference type="GO" id="GO:0006355">
    <property type="term" value="P:regulation of DNA-templated transcription"/>
    <property type="evidence" value="ECO:0007669"/>
    <property type="project" value="InterPro"/>
</dbReference>
<dbReference type="CDD" id="cd20136">
    <property type="entry name" value="MBT_L3MBTL4_rpt2"/>
    <property type="match status" value="1"/>
</dbReference>
<dbReference type="CDD" id="cd09582">
    <property type="entry name" value="SAM_Scm-like-3MBT3_4"/>
    <property type="match status" value="1"/>
</dbReference>
<dbReference type="FunFam" id="2.30.30.140:FF:000007">
    <property type="entry name" value="Lethal(3)malignant brain tumor-like protein 1"/>
    <property type="match status" value="1"/>
</dbReference>
<dbReference type="Gene3D" id="2.30.30.140">
    <property type="match status" value="3"/>
</dbReference>
<dbReference type="Gene3D" id="4.10.320.30">
    <property type="match status" value="1"/>
</dbReference>
<dbReference type="Gene3D" id="1.10.150.50">
    <property type="entry name" value="Transcription Factor, Ets-1"/>
    <property type="match status" value="1"/>
</dbReference>
<dbReference type="InterPro" id="IPR004092">
    <property type="entry name" value="Mbt"/>
</dbReference>
<dbReference type="InterPro" id="IPR050548">
    <property type="entry name" value="PcG_chromatin_remod_factors"/>
</dbReference>
<dbReference type="InterPro" id="IPR001660">
    <property type="entry name" value="SAM"/>
</dbReference>
<dbReference type="InterPro" id="IPR013761">
    <property type="entry name" value="SAM/pointed_sf"/>
</dbReference>
<dbReference type="InterPro" id="IPR002515">
    <property type="entry name" value="Znf_C2H2C"/>
</dbReference>
<dbReference type="PANTHER" id="PTHR12247:SF78">
    <property type="entry name" value="LETHAL(3)MALIGNANT BRAIN TUMOR-LIKE PROTEIN 4"/>
    <property type="match status" value="1"/>
</dbReference>
<dbReference type="PANTHER" id="PTHR12247">
    <property type="entry name" value="POLYCOMB GROUP PROTEIN"/>
    <property type="match status" value="1"/>
</dbReference>
<dbReference type="Pfam" id="PF02820">
    <property type="entry name" value="MBT"/>
    <property type="match status" value="3"/>
</dbReference>
<dbReference type="Pfam" id="PF00536">
    <property type="entry name" value="SAM_1"/>
    <property type="match status" value="1"/>
</dbReference>
<dbReference type="Pfam" id="PF01530">
    <property type="entry name" value="zf-C2HC"/>
    <property type="match status" value="1"/>
</dbReference>
<dbReference type="SMART" id="SM00561">
    <property type="entry name" value="MBT"/>
    <property type="match status" value="3"/>
</dbReference>
<dbReference type="SMART" id="SM00454">
    <property type="entry name" value="SAM"/>
    <property type="match status" value="1"/>
</dbReference>
<dbReference type="SUPFAM" id="SSF47769">
    <property type="entry name" value="SAM/Pointed domain"/>
    <property type="match status" value="1"/>
</dbReference>
<dbReference type="SUPFAM" id="SSF63748">
    <property type="entry name" value="Tudor/PWWP/MBT"/>
    <property type="match status" value="3"/>
</dbReference>
<dbReference type="PROSITE" id="PS51079">
    <property type="entry name" value="MBT"/>
    <property type="match status" value="3"/>
</dbReference>
<dbReference type="PROSITE" id="PS50105">
    <property type="entry name" value="SAM_DOMAIN"/>
    <property type="match status" value="1"/>
</dbReference>
<dbReference type="PROSITE" id="PS51802">
    <property type="entry name" value="ZF_CCHHC"/>
    <property type="match status" value="1"/>
</dbReference>